<comment type="function">
    <text evidence="1">mRNA-binding protein involved in proper cytoplasmic distribution of mitochondria.</text>
</comment>
<comment type="subunit">
    <text evidence="1">May associate with the eukaryotic translation initiation factor 3 (eIF-3) complex.</text>
</comment>
<comment type="subcellular location">
    <subcellularLocation>
        <location evidence="1">Cytoplasm</location>
    </subcellularLocation>
</comment>
<comment type="similarity">
    <text evidence="1">Belongs to the CLU family.</text>
</comment>
<proteinExistence type="inferred from homology"/>
<dbReference type="EMBL" id="AE016815">
    <property type="protein sequence ID" value="AAS50820.2"/>
    <property type="molecule type" value="Genomic_DNA"/>
</dbReference>
<dbReference type="RefSeq" id="NP_982996.2">
    <property type="nucleotide sequence ID" value="NM_208349.2"/>
</dbReference>
<dbReference type="SMR" id="Q75DR9"/>
<dbReference type="FunCoup" id="Q75DR9">
    <property type="interactions" value="1086"/>
</dbReference>
<dbReference type="STRING" id="284811.Q75DR9"/>
<dbReference type="EnsemblFungi" id="AAS50820">
    <property type="protein sequence ID" value="AAS50820"/>
    <property type="gene ID" value="AGOS_ABR050W"/>
</dbReference>
<dbReference type="GeneID" id="4619000"/>
<dbReference type="KEGG" id="ago:AGOS_ABR050W"/>
<dbReference type="eggNOG" id="KOG1839">
    <property type="taxonomic scope" value="Eukaryota"/>
</dbReference>
<dbReference type="HOGENOM" id="CLU_003256_2_0_1"/>
<dbReference type="InParanoid" id="Q75DR9"/>
<dbReference type="OMA" id="HPVWDKD"/>
<dbReference type="OrthoDB" id="1414216at2759"/>
<dbReference type="Proteomes" id="UP000000591">
    <property type="component" value="Chromosome II"/>
</dbReference>
<dbReference type="GO" id="GO:0005737">
    <property type="term" value="C:cytoplasm"/>
    <property type="evidence" value="ECO:0000318"/>
    <property type="project" value="GO_Central"/>
</dbReference>
<dbReference type="GO" id="GO:0003729">
    <property type="term" value="F:mRNA binding"/>
    <property type="evidence" value="ECO:0000318"/>
    <property type="project" value="GO_Central"/>
</dbReference>
<dbReference type="GO" id="GO:0048312">
    <property type="term" value="P:intracellular distribution of mitochondria"/>
    <property type="evidence" value="ECO:0000318"/>
    <property type="project" value="GO_Central"/>
</dbReference>
<dbReference type="GO" id="GO:0007005">
    <property type="term" value="P:mitochondrion organization"/>
    <property type="evidence" value="ECO:0007669"/>
    <property type="project" value="UniProtKB-UniRule"/>
</dbReference>
<dbReference type="CDD" id="cd15466">
    <property type="entry name" value="CLU-central"/>
    <property type="match status" value="1"/>
</dbReference>
<dbReference type="FunFam" id="3.30.2280.10:FF:000002">
    <property type="entry name" value="Clustered mitochondria protein homolog"/>
    <property type="match status" value="1"/>
</dbReference>
<dbReference type="Gene3D" id="3.30.2280.10">
    <property type="entry name" value="Hypothetical protein (hspc210)"/>
    <property type="match status" value="1"/>
</dbReference>
<dbReference type="Gene3D" id="1.25.40.10">
    <property type="entry name" value="Tetratricopeptide repeat domain"/>
    <property type="match status" value="2"/>
</dbReference>
<dbReference type="HAMAP" id="MF_03013">
    <property type="entry name" value="CLU"/>
    <property type="match status" value="1"/>
</dbReference>
<dbReference type="InterPro" id="IPR033646">
    <property type="entry name" value="CLU-central"/>
</dbReference>
<dbReference type="InterPro" id="IPR025697">
    <property type="entry name" value="CLU_dom"/>
</dbReference>
<dbReference type="InterPro" id="IPR028275">
    <property type="entry name" value="CLU_N"/>
</dbReference>
<dbReference type="InterPro" id="IPR027523">
    <property type="entry name" value="CLU_prot"/>
</dbReference>
<dbReference type="InterPro" id="IPR023231">
    <property type="entry name" value="GSKIP_dom_sf"/>
</dbReference>
<dbReference type="InterPro" id="IPR011990">
    <property type="entry name" value="TPR-like_helical_dom_sf"/>
</dbReference>
<dbReference type="PANTHER" id="PTHR12601:SF6">
    <property type="entry name" value="CLUSTERED MITOCHONDRIA PROTEIN HOMOLOG"/>
    <property type="match status" value="1"/>
</dbReference>
<dbReference type="PANTHER" id="PTHR12601">
    <property type="entry name" value="EUKARYOTIC TRANSLATION INITIATION FACTOR 3 SUBUNIT EIF-3"/>
    <property type="match status" value="1"/>
</dbReference>
<dbReference type="Pfam" id="PF13236">
    <property type="entry name" value="CLU"/>
    <property type="match status" value="1"/>
</dbReference>
<dbReference type="Pfam" id="PF15044">
    <property type="entry name" value="CLU_N"/>
    <property type="match status" value="1"/>
</dbReference>
<dbReference type="Pfam" id="PF12807">
    <property type="entry name" value="eIF3_p135"/>
    <property type="match status" value="1"/>
</dbReference>
<dbReference type="Pfam" id="PF13374">
    <property type="entry name" value="TPR_10"/>
    <property type="match status" value="1"/>
</dbReference>
<dbReference type="SUPFAM" id="SSF103107">
    <property type="entry name" value="Hypothetical protein c14orf129, hspc210"/>
    <property type="match status" value="1"/>
</dbReference>
<dbReference type="SUPFAM" id="SSF48452">
    <property type="entry name" value="TPR-like"/>
    <property type="match status" value="1"/>
</dbReference>
<dbReference type="PROSITE" id="PS51823">
    <property type="entry name" value="CLU"/>
    <property type="match status" value="1"/>
</dbReference>
<keyword id="KW-0175">Coiled coil</keyword>
<keyword id="KW-0963">Cytoplasm</keyword>
<keyword id="KW-1185">Reference proteome</keyword>
<keyword id="KW-0677">Repeat</keyword>
<keyword id="KW-0802">TPR repeat</keyword>
<gene>
    <name evidence="1" type="primary">CLU1</name>
    <name evidence="1" type="synonym">TIF31</name>
    <name type="ordered locus">ABR050W</name>
    <name type="ORF">AGOS_ABR050W</name>
</gene>
<organism>
    <name type="scientific">Eremothecium gossypii (strain ATCC 10895 / CBS 109.51 / FGSC 9923 / NRRL Y-1056)</name>
    <name type="common">Yeast</name>
    <name type="synonym">Ashbya gossypii</name>
    <dbReference type="NCBI Taxonomy" id="284811"/>
    <lineage>
        <taxon>Eukaryota</taxon>
        <taxon>Fungi</taxon>
        <taxon>Dikarya</taxon>
        <taxon>Ascomycota</taxon>
        <taxon>Saccharomycotina</taxon>
        <taxon>Saccharomycetes</taxon>
        <taxon>Saccharomycetales</taxon>
        <taxon>Saccharomycetaceae</taxon>
        <taxon>Eremothecium</taxon>
    </lineage>
</organism>
<evidence type="ECO:0000255" key="1">
    <source>
        <dbReference type="HAMAP-Rule" id="MF_03013"/>
    </source>
</evidence>
<evidence type="ECO:0000255" key="2">
    <source>
        <dbReference type="PROSITE-ProRule" id="PRU01167"/>
    </source>
</evidence>
<name>CLU_EREGS</name>
<feature type="chain" id="PRO_0000366392" description="Clustered mitochondria protein homolog">
    <location>
        <begin position="1"/>
        <end position="1228"/>
    </location>
</feature>
<feature type="domain" description="Clu" evidence="2">
    <location>
        <begin position="298"/>
        <end position="557"/>
    </location>
</feature>
<feature type="repeat" description="TPR 1">
    <location>
        <begin position="486"/>
        <end position="519"/>
    </location>
</feature>
<feature type="repeat" description="TPR 2">
    <location>
        <begin position="982"/>
        <end position="1015"/>
    </location>
</feature>
<feature type="repeat" description="TPR 3">
    <location>
        <begin position="1108"/>
        <end position="1141"/>
    </location>
</feature>
<feature type="coiled-coil region" evidence="1">
    <location>
        <begin position="671"/>
        <end position="702"/>
    </location>
</feature>
<reference key="1">
    <citation type="journal article" date="2004" name="Science">
        <title>The Ashbya gossypii genome as a tool for mapping the ancient Saccharomyces cerevisiae genome.</title>
        <authorList>
            <person name="Dietrich F.S."/>
            <person name="Voegeli S."/>
            <person name="Brachat S."/>
            <person name="Lerch A."/>
            <person name="Gates K."/>
            <person name="Steiner S."/>
            <person name="Mohr C."/>
            <person name="Poehlmann R."/>
            <person name="Luedi P."/>
            <person name="Choi S."/>
            <person name="Wing R.A."/>
            <person name="Flavier A."/>
            <person name="Gaffney T.D."/>
            <person name="Philippsen P."/>
        </authorList>
    </citation>
    <scope>NUCLEOTIDE SEQUENCE [LARGE SCALE GENOMIC DNA]</scope>
    <source>
        <strain>ATCC 10895 / CBS 109.51 / FGSC 9923 / NRRL Y-1056</strain>
    </source>
</reference>
<reference key="2">
    <citation type="journal article" date="2013" name="G3 (Bethesda)">
        <title>Genomes of Ashbya fungi isolated from insects reveal four mating-type loci, numerous translocations, lack of transposons, and distinct gene duplications.</title>
        <authorList>
            <person name="Dietrich F.S."/>
            <person name="Voegeli S."/>
            <person name="Kuo S."/>
            <person name="Philippsen P."/>
        </authorList>
    </citation>
    <scope>GENOME REANNOTATION</scope>
    <scope>SEQUENCE REVISION TO 439; 442-452; 905-906; 927; 930; 952; 954; 961 AND 966</scope>
    <source>
        <strain>ATCC 10895 / CBS 109.51 / FGSC 9923 / NRRL Y-1056</strain>
    </source>
</reference>
<sequence>MSKELDTVEVSIRVPFGKSKRLSTTASRRARVQSIMYFLAFNAASKYYTNYELLHNGVEVDEQQLISELAGNEQTVHLQLRLKPYNTGEVIRHFVTFREYIGFVGDSDDDITSLALSNVAKFRELPLTDIAAASGKTEVADDRQKEEFQVSDAEKAVFTKELDSILELRPSAQDVLKGGSALSKPCLRSLIISGYNPVPAFFRTKGHLLYLQAVTLEGETLHITATVSGFYVNKSSAIKFDPTLKTDAAVCLTLYELLTKHSKKFASHLSQLEAALKAHESVNYVKPISVFLHKTWFPSSLPSNSIDFTEYQLEALNFQTERNFNDEFQAVKETSSEDIVARLEKEKLLNRVIHDFNVAASKGSMEIFYGNMVAMNPDAPRQEHIFLKNNIFYSFVSDLDGHYQDKGGDAAAHAASNQDLHIIKTLLQSNMRSVRHLLTAVVEFGGVRILAQSPVPGILDTAGMKFIKNEKGEEEAIQAKNDITVCYGFDEASNKVIADAEFGSSLDDFAKVFHLKKHEVDGVELKVASTSKGVVGFDKRNYILDLADNNPLDVGFALENFDAVTDEKARYPHRQTLLRRELVEKWWFSKVDGTGSEMEAAYEEGKFSYNPDAYKIEGIEDETVVELSDYLRKEVVPTLVKEVAEGSITAPFNGEHLVDIMHKNGINIRYLGRVIELAEQELEAQRALREAHLQQVEADNKEFTEWEANYLKHIESLIKERQVTIQKLLAEGKEVPAELKEELKLDDKEIRKPHEKEGVAVNNDQLSVLLTLAQIEIISRSIKHVFRKHCHELPAVIIPTFIAFALNLLFGYCYNKAPIAEFPTDGSDIDFAFTKLTREQLLSEISEQAVLRFRYTLPDGWESRYEHTPFALLRPICNKFGIQLLNKEYFFTREQYQNWRQAQDKKIRSKLVEPVSTFSINDLSVRPIIKVATLTTGVSDDCWAQGAYMINEEEKQATALALFSQSIAFREETSGYVHPTVAESYLALSTIHSKLEKKSEAVALCRKACAIYERVCGFDSFEMIRSLNNLAMLEMANDSPYNAALCLKTIMSILSVVIPVNHPATINSYSMLHSMCSSLQNSSAMIKVLNKLGDIIVEIDGHKSLPYAVNESRLANLYASVGEYKRSLACIESCYELFSKELGVNHKTTVECNSWITGVENLIESTSQSKALAASKAAAAAKQGEKKPAQKQQQSAELRDKSIDELMNFINGGSAPAKKSKKKKNAKK</sequence>
<accession>Q75DR9</accession>
<protein>
    <recommendedName>
        <fullName evidence="1">Clustered mitochondria protein homolog</fullName>
    </recommendedName>
    <alternativeName>
        <fullName evidence="1">Protein TIF31 homolog</fullName>
    </alternativeName>
</protein>